<comment type="function">
    <text evidence="1">Probably part of an ABC transporter complex that could be involved in peptide import. Probably responsible for the translocation of the substrate across the membrane (By similarity).</text>
</comment>
<comment type="subunit">
    <text evidence="4">The complex is composed of two ATP-binding proteins (BOV_A0347 and BOV_A0348), two transmembrane proteins (BOV_A0350 and BOV_A0351) and a solute-binding protein (BOV_A0352).</text>
</comment>
<comment type="subcellular location">
    <subcellularLocation>
        <location evidence="4">Cell inner membrane</location>
        <topology evidence="2">Multi-pass membrane protein</topology>
    </subcellularLocation>
</comment>
<comment type="similarity">
    <text evidence="4">Belongs to the binding-protein-dependent transport system permease family.</text>
</comment>
<gene>
    <name type="ordered locus">BOV_A0350</name>
</gene>
<proteinExistence type="inferred from homology"/>
<feature type="chain" id="PRO_0000328712" description="Putative peptide permease protein BOV_A0350">
    <location>
        <begin position="1"/>
        <end position="302"/>
    </location>
</feature>
<feature type="transmembrane region" description="Helical" evidence="2">
    <location>
        <begin position="38"/>
        <end position="58"/>
    </location>
</feature>
<feature type="transmembrane region" description="Helical" evidence="2">
    <location>
        <begin position="101"/>
        <end position="121"/>
    </location>
</feature>
<feature type="transmembrane region" description="Helical" evidence="2">
    <location>
        <begin position="147"/>
        <end position="167"/>
    </location>
</feature>
<feature type="transmembrane region" description="Helical" evidence="2">
    <location>
        <begin position="200"/>
        <end position="222"/>
    </location>
</feature>
<feature type="transmembrane region" description="Helical" evidence="2">
    <location>
        <begin position="230"/>
        <end position="250"/>
    </location>
</feature>
<feature type="transmembrane region" description="Helical" evidence="2">
    <location>
        <begin position="268"/>
        <end position="288"/>
    </location>
</feature>
<feature type="domain" description="ABC transmembrane type-1" evidence="2">
    <location>
        <begin position="97"/>
        <end position="288"/>
    </location>
</feature>
<feature type="region of interest" description="Disordered" evidence="3">
    <location>
        <begin position="1"/>
        <end position="22"/>
    </location>
</feature>
<name>Y2550_BRUO2</name>
<evidence type="ECO:0000250" key="1"/>
<evidence type="ECO:0000255" key="2">
    <source>
        <dbReference type="PROSITE-ProRule" id="PRU00441"/>
    </source>
</evidence>
<evidence type="ECO:0000256" key="3">
    <source>
        <dbReference type="SAM" id="MobiDB-lite"/>
    </source>
</evidence>
<evidence type="ECO:0000305" key="4"/>
<sequence length="302" mass="32508">MRSSIHASRLRKMGQSIPASTGPMARSANRFLQNRAAIFGLVLLTPLLFAVLTYPLWLPYKPNDIDLMAMNSAPSWKHWFGADGVGRDVFARTMEGGRISLLVAVSSVVLSTAIGFLIGAISALGGRWADAIAMRSVDLAMTLPPVIFLLVLASIIGSGIWSTVVVIALLSWPVLSRMIRARLLELREREFVMASRGMGAGLGHLLFRHGLPNSIDILVVYATLQVANAILLEAGLSFLGLGVPPPAASWGNMLNAARSTAVLEQFPWQWLFPGGALVLAVLAINFIGDGLRDAFDPRAELN</sequence>
<keyword id="KW-0997">Cell inner membrane</keyword>
<keyword id="KW-1003">Cell membrane</keyword>
<keyword id="KW-0472">Membrane</keyword>
<keyword id="KW-0571">Peptide transport</keyword>
<keyword id="KW-0653">Protein transport</keyword>
<keyword id="KW-0812">Transmembrane</keyword>
<keyword id="KW-1133">Transmembrane helix</keyword>
<keyword id="KW-0813">Transport</keyword>
<protein>
    <recommendedName>
        <fullName>Putative peptide permease protein BOV_A0350</fullName>
    </recommendedName>
</protein>
<reference key="1">
    <citation type="journal article" date="2009" name="PLoS ONE">
        <title>Genome degradation in Brucella ovis corresponds with narrowing of its host range and tissue tropism.</title>
        <authorList>
            <person name="Tsolis R.M."/>
            <person name="Seshadri R."/>
            <person name="Santos R.L."/>
            <person name="Sangari F.J."/>
            <person name="Lobo J.M."/>
            <person name="de Jong M.F."/>
            <person name="Ren Q."/>
            <person name="Myers G."/>
            <person name="Brinkac L.M."/>
            <person name="Nelson W.C."/>
            <person name="Deboy R.T."/>
            <person name="Angiuoli S."/>
            <person name="Khouri H."/>
            <person name="Dimitrov G."/>
            <person name="Robinson J.R."/>
            <person name="Mulligan S."/>
            <person name="Walker R.L."/>
            <person name="Elzer P.E."/>
            <person name="Hassan K.A."/>
            <person name="Paulsen I.T."/>
        </authorList>
    </citation>
    <scope>NUCLEOTIDE SEQUENCE [LARGE SCALE GENOMIC DNA]</scope>
    <source>
        <strain>ATCC 25840 / 63/290 / NCTC 10512</strain>
    </source>
</reference>
<organism>
    <name type="scientific">Brucella ovis (strain ATCC 25840 / 63/290 / NCTC 10512)</name>
    <dbReference type="NCBI Taxonomy" id="444178"/>
    <lineage>
        <taxon>Bacteria</taxon>
        <taxon>Pseudomonadati</taxon>
        <taxon>Pseudomonadota</taxon>
        <taxon>Alphaproteobacteria</taxon>
        <taxon>Hyphomicrobiales</taxon>
        <taxon>Brucellaceae</taxon>
        <taxon>Brucella/Ochrobactrum group</taxon>
        <taxon>Brucella</taxon>
    </lineage>
</organism>
<dbReference type="EMBL" id="CP000709">
    <property type="protein sequence ID" value="ABQ62079.1"/>
    <property type="molecule type" value="Genomic_DNA"/>
</dbReference>
<dbReference type="SMR" id="A5VU89"/>
<dbReference type="KEGG" id="bov:BOV_A0350"/>
<dbReference type="HOGENOM" id="CLU_028518_1_1_5"/>
<dbReference type="Proteomes" id="UP000006383">
    <property type="component" value="Chromosome II"/>
</dbReference>
<dbReference type="GO" id="GO:0005886">
    <property type="term" value="C:plasma membrane"/>
    <property type="evidence" value="ECO:0007669"/>
    <property type="project" value="UniProtKB-SubCell"/>
</dbReference>
<dbReference type="GO" id="GO:0015833">
    <property type="term" value="P:peptide transport"/>
    <property type="evidence" value="ECO:0007669"/>
    <property type="project" value="UniProtKB-KW"/>
</dbReference>
<dbReference type="GO" id="GO:0015031">
    <property type="term" value="P:protein transport"/>
    <property type="evidence" value="ECO:0007669"/>
    <property type="project" value="UniProtKB-KW"/>
</dbReference>
<dbReference type="GO" id="GO:0055085">
    <property type="term" value="P:transmembrane transport"/>
    <property type="evidence" value="ECO:0007669"/>
    <property type="project" value="InterPro"/>
</dbReference>
<dbReference type="CDD" id="cd06261">
    <property type="entry name" value="TM_PBP2"/>
    <property type="match status" value="1"/>
</dbReference>
<dbReference type="Gene3D" id="1.10.3720.10">
    <property type="entry name" value="MetI-like"/>
    <property type="match status" value="1"/>
</dbReference>
<dbReference type="InterPro" id="IPR050366">
    <property type="entry name" value="BP-dependent_transpt_permease"/>
</dbReference>
<dbReference type="InterPro" id="IPR000515">
    <property type="entry name" value="MetI-like"/>
</dbReference>
<dbReference type="InterPro" id="IPR035906">
    <property type="entry name" value="MetI-like_sf"/>
</dbReference>
<dbReference type="InterPro" id="IPR025966">
    <property type="entry name" value="OppC_N"/>
</dbReference>
<dbReference type="PANTHER" id="PTHR43386:SF1">
    <property type="entry name" value="D,D-DIPEPTIDE TRANSPORT SYSTEM PERMEASE PROTEIN DDPC-RELATED"/>
    <property type="match status" value="1"/>
</dbReference>
<dbReference type="PANTHER" id="PTHR43386">
    <property type="entry name" value="OLIGOPEPTIDE TRANSPORT SYSTEM PERMEASE PROTEIN APPC"/>
    <property type="match status" value="1"/>
</dbReference>
<dbReference type="Pfam" id="PF00528">
    <property type="entry name" value="BPD_transp_1"/>
    <property type="match status" value="1"/>
</dbReference>
<dbReference type="Pfam" id="PF12911">
    <property type="entry name" value="OppC_N"/>
    <property type="match status" value="1"/>
</dbReference>
<dbReference type="SUPFAM" id="SSF161098">
    <property type="entry name" value="MetI-like"/>
    <property type="match status" value="1"/>
</dbReference>
<dbReference type="PROSITE" id="PS50928">
    <property type="entry name" value="ABC_TM1"/>
    <property type="match status" value="1"/>
</dbReference>
<accession>A5VU89</accession>